<organism>
    <name type="scientific">Herpetosiphon aurantiacus (strain ATCC 23779 / DSM 785 / 114-95)</name>
    <dbReference type="NCBI Taxonomy" id="316274"/>
    <lineage>
        <taxon>Bacteria</taxon>
        <taxon>Bacillati</taxon>
        <taxon>Chloroflexota</taxon>
        <taxon>Chloroflexia</taxon>
        <taxon>Herpetosiphonales</taxon>
        <taxon>Herpetosiphonaceae</taxon>
        <taxon>Herpetosiphon</taxon>
    </lineage>
</organism>
<keyword id="KW-0004">4Fe-4S</keyword>
<keyword id="KW-0963">Cytoplasm</keyword>
<keyword id="KW-0408">Iron</keyword>
<keyword id="KW-0411">Iron-sulfur</keyword>
<keyword id="KW-0479">Metal-binding</keyword>
<keyword id="KW-0949">S-adenosyl-L-methionine</keyword>
<keyword id="KW-0808">Transferase</keyword>
<dbReference type="EC" id="2.8.4.4" evidence="1"/>
<dbReference type="EMBL" id="CP000875">
    <property type="protein sequence ID" value="ABX07127.1"/>
    <property type="molecule type" value="Genomic_DNA"/>
</dbReference>
<dbReference type="SMR" id="A9AZS3"/>
<dbReference type="STRING" id="316274.Haur_4495"/>
<dbReference type="KEGG" id="hau:Haur_4495"/>
<dbReference type="eggNOG" id="COG0621">
    <property type="taxonomic scope" value="Bacteria"/>
</dbReference>
<dbReference type="HOGENOM" id="CLU_018697_0_1_0"/>
<dbReference type="InParanoid" id="A9AZS3"/>
<dbReference type="Proteomes" id="UP000000787">
    <property type="component" value="Chromosome"/>
</dbReference>
<dbReference type="GO" id="GO:0005829">
    <property type="term" value="C:cytosol"/>
    <property type="evidence" value="ECO:0007669"/>
    <property type="project" value="TreeGrafter"/>
</dbReference>
<dbReference type="GO" id="GO:0051539">
    <property type="term" value="F:4 iron, 4 sulfur cluster binding"/>
    <property type="evidence" value="ECO:0007669"/>
    <property type="project" value="UniProtKB-UniRule"/>
</dbReference>
<dbReference type="GO" id="GO:0035599">
    <property type="term" value="F:aspartic acid methylthiotransferase activity"/>
    <property type="evidence" value="ECO:0007669"/>
    <property type="project" value="TreeGrafter"/>
</dbReference>
<dbReference type="GO" id="GO:0046872">
    <property type="term" value="F:metal ion binding"/>
    <property type="evidence" value="ECO:0007669"/>
    <property type="project" value="UniProtKB-KW"/>
</dbReference>
<dbReference type="GO" id="GO:0103039">
    <property type="term" value="F:protein methylthiotransferase activity"/>
    <property type="evidence" value="ECO:0007669"/>
    <property type="project" value="UniProtKB-EC"/>
</dbReference>
<dbReference type="GO" id="GO:0006400">
    <property type="term" value="P:tRNA modification"/>
    <property type="evidence" value="ECO:0007669"/>
    <property type="project" value="InterPro"/>
</dbReference>
<dbReference type="CDD" id="cd01335">
    <property type="entry name" value="Radical_SAM"/>
    <property type="match status" value="1"/>
</dbReference>
<dbReference type="FunFam" id="3.80.30.20:FF:000001">
    <property type="entry name" value="tRNA-2-methylthio-N(6)-dimethylallyladenosine synthase 2"/>
    <property type="match status" value="1"/>
</dbReference>
<dbReference type="Gene3D" id="3.40.50.12160">
    <property type="entry name" value="Methylthiotransferase, N-terminal domain"/>
    <property type="match status" value="1"/>
</dbReference>
<dbReference type="Gene3D" id="2.40.50.140">
    <property type="entry name" value="Nucleic acid-binding proteins"/>
    <property type="match status" value="1"/>
</dbReference>
<dbReference type="Gene3D" id="3.80.30.20">
    <property type="entry name" value="tm_1862 like domain"/>
    <property type="match status" value="1"/>
</dbReference>
<dbReference type="HAMAP" id="MF_01865">
    <property type="entry name" value="MTTase_RimO"/>
    <property type="match status" value="1"/>
</dbReference>
<dbReference type="InterPro" id="IPR006638">
    <property type="entry name" value="Elp3/MiaA/NifB-like_rSAM"/>
</dbReference>
<dbReference type="InterPro" id="IPR005839">
    <property type="entry name" value="Methylthiotransferase"/>
</dbReference>
<dbReference type="InterPro" id="IPR020612">
    <property type="entry name" value="Methylthiotransferase_CS"/>
</dbReference>
<dbReference type="InterPro" id="IPR013848">
    <property type="entry name" value="Methylthiotransferase_N"/>
</dbReference>
<dbReference type="InterPro" id="IPR038135">
    <property type="entry name" value="Methylthiotransferase_N_sf"/>
</dbReference>
<dbReference type="InterPro" id="IPR000385">
    <property type="entry name" value="MoaA_NifB_PqqE_Fe-S-bd_CS"/>
</dbReference>
<dbReference type="InterPro" id="IPR012340">
    <property type="entry name" value="NA-bd_OB-fold"/>
</dbReference>
<dbReference type="InterPro" id="IPR005840">
    <property type="entry name" value="Ribosomal_uS12_MeSTrfase_RimO"/>
</dbReference>
<dbReference type="InterPro" id="IPR007197">
    <property type="entry name" value="rSAM"/>
</dbReference>
<dbReference type="InterPro" id="IPR023404">
    <property type="entry name" value="rSAM_horseshoe"/>
</dbReference>
<dbReference type="InterPro" id="IPR002792">
    <property type="entry name" value="TRAM_dom"/>
</dbReference>
<dbReference type="NCBIfam" id="TIGR01125">
    <property type="entry name" value="30S ribosomal protein S12 methylthiotransferase RimO"/>
    <property type="match status" value="1"/>
</dbReference>
<dbReference type="NCBIfam" id="TIGR00089">
    <property type="entry name" value="MiaB/RimO family radical SAM methylthiotransferase"/>
    <property type="match status" value="1"/>
</dbReference>
<dbReference type="PANTHER" id="PTHR43837">
    <property type="entry name" value="RIBOSOMAL PROTEIN S12 METHYLTHIOTRANSFERASE RIMO"/>
    <property type="match status" value="1"/>
</dbReference>
<dbReference type="PANTHER" id="PTHR43837:SF1">
    <property type="entry name" value="RIBOSOMAL PROTEIN US12 METHYLTHIOTRANSFERASE RIMO"/>
    <property type="match status" value="1"/>
</dbReference>
<dbReference type="Pfam" id="PF04055">
    <property type="entry name" value="Radical_SAM"/>
    <property type="match status" value="1"/>
</dbReference>
<dbReference type="Pfam" id="PF18693">
    <property type="entry name" value="TRAM_2"/>
    <property type="match status" value="1"/>
</dbReference>
<dbReference type="Pfam" id="PF00919">
    <property type="entry name" value="UPF0004"/>
    <property type="match status" value="1"/>
</dbReference>
<dbReference type="SFLD" id="SFLDG01082">
    <property type="entry name" value="B12-binding_domain_containing"/>
    <property type="match status" value="1"/>
</dbReference>
<dbReference type="SFLD" id="SFLDS00029">
    <property type="entry name" value="Radical_SAM"/>
    <property type="match status" value="1"/>
</dbReference>
<dbReference type="SFLD" id="SFLDF00274">
    <property type="entry name" value="ribosomal_protein_S12_methylth"/>
    <property type="match status" value="1"/>
</dbReference>
<dbReference type="SMART" id="SM00729">
    <property type="entry name" value="Elp3"/>
    <property type="match status" value="1"/>
</dbReference>
<dbReference type="SUPFAM" id="SSF102114">
    <property type="entry name" value="Radical SAM enzymes"/>
    <property type="match status" value="1"/>
</dbReference>
<dbReference type="PROSITE" id="PS51449">
    <property type="entry name" value="MTTASE_N"/>
    <property type="match status" value="1"/>
</dbReference>
<dbReference type="PROSITE" id="PS01278">
    <property type="entry name" value="MTTASE_RADICAL"/>
    <property type="match status" value="1"/>
</dbReference>
<dbReference type="PROSITE" id="PS51918">
    <property type="entry name" value="RADICAL_SAM"/>
    <property type="match status" value="1"/>
</dbReference>
<dbReference type="PROSITE" id="PS50926">
    <property type="entry name" value="TRAM"/>
    <property type="match status" value="1"/>
</dbReference>
<sequence>MKFHIITLGCPKNTVDSEGMHGILTREGHTAVDSSDGADVVIVNTCSFINAAREETVGVLQELANNKAPGQKLIAAGCMAESHGDVLRSRVPKLDATLSTKEWMRIGSVVAGGVAPSKTTGFGIPLMGGAPSAMPSTGLNLSLTPAATGDSLGAYGDWRTTAITRNKRGPSAYLKISDGCNLRCAFCTIPSFKGDMRSKAVGSILGEARELVEAGVQEIILVAQHLTDYGRDLGMKQNGLGVLLEELAAVVPADRWIRLMYAYPQSVTPDLVETMARLPQLCHYVDMPLQHAHPDTLRRMRRPPDTDKTKAIVNSLRQAMPDLSLRTTFIVGYPGETRDEFKALLEFLEEMQFDRVGMFRYSLEPGTVAGELPDQVAERVKERRWNEAMAVQQVISRARTARFVGQTMKVLVEGTGTDDDGRAIVVGRSYRDAPEVDGLVFGYGAADVGQFAKIAINKTTDYDLWGEIV</sequence>
<accession>A9AZS3</accession>
<protein>
    <recommendedName>
        <fullName evidence="1">Ribosomal protein uS12 methylthiotransferase RimO</fullName>
        <shortName evidence="1">uS12 MTTase</shortName>
        <shortName evidence="1">uS12 methylthiotransferase</shortName>
        <ecNumber evidence="1">2.8.4.4</ecNumber>
    </recommendedName>
    <alternativeName>
        <fullName evidence="1">Ribosomal protein uS12 (aspartate-C(3))-methylthiotransferase</fullName>
    </alternativeName>
    <alternativeName>
        <fullName evidence="1">Ribosome maturation factor RimO</fullName>
    </alternativeName>
</protein>
<comment type="function">
    <text evidence="1">Catalyzes the methylthiolation of an aspartic acid residue of ribosomal protein uS12.</text>
</comment>
<comment type="catalytic activity">
    <reaction evidence="1">
        <text>L-aspartate(89)-[ribosomal protein uS12]-hydrogen + (sulfur carrier)-SH + AH2 + 2 S-adenosyl-L-methionine = 3-methylsulfanyl-L-aspartate(89)-[ribosomal protein uS12]-hydrogen + (sulfur carrier)-H + 5'-deoxyadenosine + L-methionine + A + S-adenosyl-L-homocysteine + 2 H(+)</text>
        <dbReference type="Rhea" id="RHEA:37087"/>
        <dbReference type="Rhea" id="RHEA-COMP:10460"/>
        <dbReference type="Rhea" id="RHEA-COMP:10461"/>
        <dbReference type="Rhea" id="RHEA-COMP:14737"/>
        <dbReference type="Rhea" id="RHEA-COMP:14739"/>
        <dbReference type="ChEBI" id="CHEBI:13193"/>
        <dbReference type="ChEBI" id="CHEBI:15378"/>
        <dbReference type="ChEBI" id="CHEBI:17319"/>
        <dbReference type="ChEBI" id="CHEBI:17499"/>
        <dbReference type="ChEBI" id="CHEBI:29917"/>
        <dbReference type="ChEBI" id="CHEBI:29961"/>
        <dbReference type="ChEBI" id="CHEBI:57844"/>
        <dbReference type="ChEBI" id="CHEBI:57856"/>
        <dbReference type="ChEBI" id="CHEBI:59789"/>
        <dbReference type="ChEBI" id="CHEBI:64428"/>
        <dbReference type="ChEBI" id="CHEBI:73599"/>
        <dbReference type="EC" id="2.8.4.4"/>
    </reaction>
</comment>
<comment type="cofactor">
    <cofactor evidence="1">
        <name>[4Fe-4S] cluster</name>
        <dbReference type="ChEBI" id="CHEBI:49883"/>
    </cofactor>
    <text evidence="1">Binds 2 [4Fe-4S] clusters. One cluster is coordinated with 3 cysteines and an exchangeable S-adenosyl-L-methionine.</text>
</comment>
<comment type="subcellular location">
    <subcellularLocation>
        <location evidence="1">Cytoplasm</location>
    </subcellularLocation>
</comment>
<comment type="similarity">
    <text evidence="1">Belongs to the methylthiotransferase family. RimO subfamily.</text>
</comment>
<evidence type="ECO:0000255" key="1">
    <source>
        <dbReference type="HAMAP-Rule" id="MF_01865"/>
    </source>
</evidence>
<evidence type="ECO:0000255" key="2">
    <source>
        <dbReference type="PROSITE-ProRule" id="PRU01266"/>
    </source>
</evidence>
<gene>
    <name evidence="1" type="primary">rimO</name>
    <name type="ordered locus">Haur_4495</name>
</gene>
<feature type="chain" id="PRO_0000374864" description="Ribosomal protein uS12 methylthiotransferase RimO">
    <location>
        <begin position="1"/>
        <end position="469"/>
    </location>
</feature>
<feature type="domain" description="MTTase N-terminal" evidence="1">
    <location>
        <begin position="1"/>
        <end position="115"/>
    </location>
</feature>
<feature type="domain" description="Radical SAM core" evidence="2">
    <location>
        <begin position="166"/>
        <end position="398"/>
    </location>
</feature>
<feature type="domain" description="TRAM" evidence="1">
    <location>
        <begin position="401"/>
        <end position="469"/>
    </location>
</feature>
<feature type="binding site" evidence="1">
    <location>
        <position position="10"/>
    </location>
    <ligand>
        <name>[4Fe-4S] cluster</name>
        <dbReference type="ChEBI" id="CHEBI:49883"/>
        <label>1</label>
    </ligand>
</feature>
<feature type="binding site" evidence="1">
    <location>
        <position position="46"/>
    </location>
    <ligand>
        <name>[4Fe-4S] cluster</name>
        <dbReference type="ChEBI" id="CHEBI:49883"/>
        <label>1</label>
    </ligand>
</feature>
<feature type="binding site" evidence="1">
    <location>
        <position position="78"/>
    </location>
    <ligand>
        <name>[4Fe-4S] cluster</name>
        <dbReference type="ChEBI" id="CHEBI:49883"/>
        <label>1</label>
    </ligand>
</feature>
<feature type="binding site" evidence="1">
    <location>
        <position position="180"/>
    </location>
    <ligand>
        <name>[4Fe-4S] cluster</name>
        <dbReference type="ChEBI" id="CHEBI:49883"/>
        <label>2</label>
        <note>4Fe-4S-S-AdoMet</note>
    </ligand>
</feature>
<feature type="binding site" evidence="1">
    <location>
        <position position="184"/>
    </location>
    <ligand>
        <name>[4Fe-4S] cluster</name>
        <dbReference type="ChEBI" id="CHEBI:49883"/>
        <label>2</label>
        <note>4Fe-4S-S-AdoMet</note>
    </ligand>
</feature>
<feature type="binding site" evidence="1">
    <location>
        <position position="187"/>
    </location>
    <ligand>
        <name>[4Fe-4S] cluster</name>
        <dbReference type="ChEBI" id="CHEBI:49883"/>
        <label>2</label>
        <note>4Fe-4S-S-AdoMet</note>
    </ligand>
</feature>
<reference key="1">
    <citation type="journal article" date="2011" name="Stand. Genomic Sci.">
        <title>Complete genome sequence of the filamentous gliding predatory bacterium Herpetosiphon aurantiacus type strain (114-95(T)).</title>
        <authorList>
            <person name="Kiss H."/>
            <person name="Nett M."/>
            <person name="Domin N."/>
            <person name="Martin K."/>
            <person name="Maresca J.A."/>
            <person name="Copeland A."/>
            <person name="Lapidus A."/>
            <person name="Lucas S."/>
            <person name="Berry K.W."/>
            <person name="Glavina Del Rio T."/>
            <person name="Dalin E."/>
            <person name="Tice H."/>
            <person name="Pitluck S."/>
            <person name="Richardson P."/>
            <person name="Bruce D."/>
            <person name="Goodwin L."/>
            <person name="Han C."/>
            <person name="Detter J.C."/>
            <person name="Schmutz J."/>
            <person name="Brettin T."/>
            <person name="Land M."/>
            <person name="Hauser L."/>
            <person name="Kyrpides N.C."/>
            <person name="Ivanova N."/>
            <person name="Goeker M."/>
            <person name="Woyke T."/>
            <person name="Klenk H.P."/>
            <person name="Bryant D.A."/>
        </authorList>
    </citation>
    <scope>NUCLEOTIDE SEQUENCE [LARGE SCALE GENOMIC DNA]</scope>
    <source>
        <strain>ATCC 23779 / DSM 785 / 114-95</strain>
    </source>
</reference>
<name>RIMO_HERA2</name>
<proteinExistence type="inferred from homology"/>